<gene>
    <name type="primary">sspC</name>
    <name type="ordered locus">SACOL1055</name>
</gene>
<keyword id="KW-0963">Cytoplasm</keyword>
<keyword id="KW-0646">Protease inhibitor</keyword>
<keyword id="KW-0789">Thiol protease inhibitor</keyword>
<keyword id="KW-0843">Virulence</keyword>
<dbReference type="EMBL" id="CP000046">
    <property type="protein sequence ID" value="AAW36520.1"/>
    <property type="molecule type" value="Genomic_DNA"/>
</dbReference>
<dbReference type="RefSeq" id="WP_000284457.1">
    <property type="nucleotide sequence ID" value="NZ_JBGOFO010000002.1"/>
</dbReference>
<dbReference type="SMR" id="Q5HH37"/>
<dbReference type="MEROPS" id="I57.001"/>
<dbReference type="KEGG" id="sac:SACOL1055"/>
<dbReference type="HOGENOM" id="CLU_174854_0_0_9"/>
<dbReference type="Proteomes" id="UP000000530">
    <property type="component" value="Chromosome"/>
</dbReference>
<dbReference type="GO" id="GO:0005737">
    <property type="term" value="C:cytoplasm"/>
    <property type="evidence" value="ECO:0007669"/>
    <property type="project" value="UniProtKB-SubCell"/>
</dbReference>
<dbReference type="GO" id="GO:0004869">
    <property type="term" value="F:cysteine-type endopeptidase inhibitor activity"/>
    <property type="evidence" value="ECO:0007669"/>
    <property type="project" value="UniProtKB-KW"/>
</dbReference>
<dbReference type="Gene3D" id="2.40.310.10">
    <property type="entry name" value="beta-Barrel protease inhibitors"/>
    <property type="match status" value="1"/>
</dbReference>
<dbReference type="InterPro" id="IPR016085">
    <property type="entry name" value="Protease_inh_b-brl_dom"/>
</dbReference>
<dbReference type="InterPro" id="IPR037296">
    <property type="entry name" value="Staphostatin_A/B"/>
</dbReference>
<dbReference type="InterPro" id="IPR015113">
    <property type="entry name" value="Staphostatin_B"/>
</dbReference>
<dbReference type="Pfam" id="PF09023">
    <property type="entry name" value="Staphostatin_B"/>
    <property type="match status" value="1"/>
</dbReference>
<dbReference type="SUPFAM" id="SSF50882">
    <property type="entry name" value="beta-Barrel protease inhibitors"/>
    <property type="match status" value="1"/>
</dbReference>
<feature type="chain" id="PRO_0000220554" description="Staphostatin B">
    <location>
        <begin position="1"/>
        <end position="109"/>
    </location>
</feature>
<feature type="region of interest" description="Binds to staphopain B" evidence="1">
    <location>
        <begin position="97"/>
        <end position="101"/>
    </location>
</feature>
<organism>
    <name type="scientific">Staphylococcus aureus (strain COL)</name>
    <dbReference type="NCBI Taxonomy" id="93062"/>
    <lineage>
        <taxon>Bacteria</taxon>
        <taxon>Bacillati</taxon>
        <taxon>Bacillota</taxon>
        <taxon>Bacilli</taxon>
        <taxon>Bacillales</taxon>
        <taxon>Staphylococcaceae</taxon>
        <taxon>Staphylococcus</taxon>
    </lineage>
</organism>
<sequence length="109" mass="12882">MYQLQFINLVYDTTKLTHLEQTNINLFIGNWSNHQLQKSICIRHGDDTSHNQYHILFIDTAHQRIKFSSIDNEEIIYILDYDDTQHILMQTSSKQGIGTSRPIVYERLV</sequence>
<evidence type="ECO:0000250" key="1"/>
<evidence type="ECO:0000305" key="2"/>
<comment type="function">
    <text evidence="1">Specifically inhibits the cysteine protease staphopain B (SspB) by blocking the active site of the enzyme. Probably required to protect cytoplasmic proteins from being degraded by prematurely activated/folded prostaphopain B. Also involved in growth capacity, viability and bacterial morphology (By similarity).</text>
</comment>
<comment type="subunit">
    <text evidence="1">Forms a stable non-covalent complex with prematurely activated/folded SspB.</text>
</comment>
<comment type="subcellular location">
    <subcellularLocation>
        <location evidence="1">Cytoplasm</location>
    </subcellularLocation>
</comment>
<comment type="miscellaneous">
    <text evidence="1">Inactivated by staphylococcal serine protease (SspA).</text>
</comment>
<comment type="similarity">
    <text evidence="2">Belongs to the protease inhibitor I57 (SspC) family.</text>
</comment>
<accession>Q5HH37</accession>
<proteinExistence type="inferred from homology"/>
<protein>
    <recommendedName>
        <fullName>Staphostatin B</fullName>
    </recommendedName>
    <alternativeName>
        <fullName>Staphylococcal cysteine protease B inhibitor</fullName>
    </alternativeName>
</protein>
<name>SSPC_STAAC</name>
<reference key="1">
    <citation type="journal article" date="2005" name="J. Bacteriol.">
        <title>Insights on evolution of virulence and resistance from the complete genome analysis of an early methicillin-resistant Staphylococcus aureus strain and a biofilm-producing methicillin-resistant Staphylococcus epidermidis strain.</title>
        <authorList>
            <person name="Gill S.R."/>
            <person name="Fouts D.E."/>
            <person name="Archer G.L."/>
            <person name="Mongodin E.F."/>
            <person name="DeBoy R.T."/>
            <person name="Ravel J."/>
            <person name="Paulsen I.T."/>
            <person name="Kolonay J.F."/>
            <person name="Brinkac L.M."/>
            <person name="Beanan M.J."/>
            <person name="Dodson R.J."/>
            <person name="Daugherty S.C."/>
            <person name="Madupu R."/>
            <person name="Angiuoli S.V."/>
            <person name="Durkin A.S."/>
            <person name="Haft D.H."/>
            <person name="Vamathevan J.J."/>
            <person name="Khouri H."/>
            <person name="Utterback T.R."/>
            <person name="Lee C."/>
            <person name="Dimitrov G."/>
            <person name="Jiang L."/>
            <person name="Qin H."/>
            <person name="Weidman J."/>
            <person name="Tran K."/>
            <person name="Kang K.H."/>
            <person name="Hance I.R."/>
            <person name="Nelson K.E."/>
            <person name="Fraser C.M."/>
        </authorList>
    </citation>
    <scope>NUCLEOTIDE SEQUENCE [LARGE SCALE GENOMIC DNA]</scope>
    <source>
        <strain>COL</strain>
    </source>
</reference>